<dbReference type="EMBL" id="FO080229">
    <property type="protein sequence ID" value="CCD62189.1"/>
    <property type="molecule type" value="Genomic_DNA"/>
</dbReference>
<dbReference type="EMBL" id="FO080229">
    <property type="protein sequence ID" value="CCD62190.1"/>
    <property type="molecule type" value="Genomic_DNA"/>
</dbReference>
<dbReference type="PIR" id="T32587">
    <property type="entry name" value="T32587"/>
</dbReference>
<dbReference type="RefSeq" id="NP_500335.1">
    <molecule id="O44440-1"/>
    <property type="nucleotide sequence ID" value="NM_067934.4"/>
</dbReference>
<dbReference type="RefSeq" id="NP_872097.1">
    <property type="nucleotide sequence ID" value="NM_182297.3"/>
</dbReference>
<dbReference type="SMR" id="O44440"/>
<dbReference type="FunCoup" id="O44440">
    <property type="interactions" value="822"/>
</dbReference>
<dbReference type="STRING" id="6239.B0546.4a.1"/>
<dbReference type="PaxDb" id="6239-B0546.4a"/>
<dbReference type="EnsemblMetazoa" id="B0546.4a.1">
    <molecule id="O44440-1"/>
    <property type="protein sequence ID" value="B0546.4a.1"/>
    <property type="gene ID" value="WBGene00015251"/>
</dbReference>
<dbReference type="GeneID" id="177105"/>
<dbReference type="KEGG" id="cel:CELE_B0546.4"/>
<dbReference type="UCSC" id="B0546.4b">
    <molecule id="O44440-1"/>
    <property type="organism name" value="c. elegans"/>
</dbReference>
<dbReference type="AGR" id="WB:WBGene00015251"/>
<dbReference type="CTD" id="177105"/>
<dbReference type="WormBase" id="B0546.4a">
    <molecule id="O44440-1"/>
    <property type="protein sequence ID" value="CE16795"/>
    <property type="gene ID" value="WBGene00015251"/>
</dbReference>
<dbReference type="eggNOG" id="KOG3399">
    <property type="taxonomic scope" value="Eukaryota"/>
</dbReference>
<dbReference type="HOGENOM" id="CLU_043857_1_1_1"/>
<dbReference type="InParanoid" id="O44440"/>
<dbReference type="OMA" id="FDKSQRY"/>
<dbReference type="OrthoDB" id="6407410at2759"/>
<dbReference type="PhylomeDB" id="O44440"/>
<dbReference type="PRO" id="PR:O44440"/>
<dbReference type="Proteomes" id="UP000001940">
    <property type="component" value="Chromosome IV"/>
</dbReference>
<dbReference type="Bgee" id="WBGene00015251">
    <property type="expression patterns" value="Expressed in pharyngeal muscle cell (C elegans) and 4 other cell types or tissues"/>
</dbReference>
<dbReference type="ExpressionAtlas" id="O44440">
    <property type="expression patterns" value="baseline and differential"/>
</dbReference>
<dbReference type="GO" id="GO:0000151">
    <property type="term" value="C:ubiquitin ligase complex"/>
    <property type="evidence" value="ECO:0000318"/>
    <property type="project" value="GO_Central"/>
</dbReference>
<dbReference type="GO" id="GO:0046872">
    <property type="term" value="F:metal ion binding"/>
    <property type="evidence" value="ECO:0007669"/>
    <property type="project" value="UniProtKB-KW"/>
</dbReference>
<dbReference type="InterPro" id="IPR034751">
    <property type="entry name" value="Yippee"/>
</dbReference>
<dbReference type="InterPro" id="IPR004910">
    <property type="entry name" value="Yippee/Mis18/Cereblon"/>
</dbReference>
<dbReference type="InterPro" id="IPR039058">
    <property type="entry name" value="Yippee_fam"/>
</dbReference>
<dbReference type="PANTHER" id="PTHR13848">
    <property type="entry name" value="PROTEIN YIPPEE-LIKE CG15309-RELATED"/>
    <property type="match status" value="1"/>
</dbReference>
<dbReference type="Pfam" id="PF03226">
    <property type="entry name" value="Yippee-Mis18"/>
    <property type="match status" value="1"/>
</dbReference>
<dbReference type="PROSITE" id="PS51792">
    <property type="entry name" value="YIPPEE"/>
    <property type="match status" value="1"/>
</dbReference>
<reference key="1">
    <citation type="journal article" date="1998" name="Science">
        <title>Genome sequence of the nematode C. elegans: a platform for investigating biology.</title>
        <authorList>
            <consortium name="The C. elegans sequencing consortium"/>
        </authorList>
    </citation>
    <scope>NUCLEOTIDE SEQUENCE [LARGE SCALE GENOMIC DNA]</scope>
    <scope>ALTERNATIVE SPLICING</scope>
    <source>
        <strain>Bristol N2</strain>
    </source>
</reference>
<keyword id="KW-0025">Alternative splicing</keyword>
<keyword id="KW-0479">Metal-binding</keyword>
<keyword id="KW-1185">Reference proteome</keyword>
<keyword id="KW-0862">Zinc</keyword>
<proteinExistence type="inferred from homology"/>
<organism>
    <name type="scientific">Caenorhabditis elegans</name>
    <dbReference type="NCBI Taxonomy" id="6239"/>
    <lineage>
        <taxon>Eukaryota</taxon>
        <taxon>Metazoa</taxon>
        <taxon>Ecdysozoa</taxon>
        <taxon>Nematoda</taxon>
        <taxon>Chromadorea</taxon>
        <taxon>Rhabditida</taxon>
        <taxon>Rhabditina</taxon>
        <taxon>Rhabditomorpha</taxon>
        <taxon>Rhabditoidea</taxon>
        <taxon>Rhabditidae</taxon>
        <taxon>Peloderinae</taxon>
        <taxon>Caenorhabditis</taxon>
    </lineage>
</organism>
<evidence type="ECO:0000255" key="1">
    <source>
        <dbReference type="PROSITE-ProRule" id="PRU01128"/>
    </source>
</evidence>
<evidence type="ECO:0000256" key="2">
    <source>
        <dbReference type="SAM" id="MobiDB-lite"/>
    </source>
</evidence>
<evidence type="ECO:0000305" key="3"/>
<feature type="chain" id="PRO_0000212400" description="Protein yippee-like B0546.4">
    <location>
        <begin position="1"/>
        <end position="161"/>
    </location>
</feature>
<feature type="domain" description="Yippee" evidence="1">
    <location>
        <begin position="14"/>
        <end position="111"/>
    </location>
</feature>
<feature type="region of interest" description="Disordered" evidence="2">
    <location>
        <begin position="117"/>
        <end position="161"/>
    </location>
</feature>
<feature type="compositionally biased region" description="Low complexity" evidence="2">
    <location>
        <begin position="151"/>
        <end position="161"/>
    </location>
</feature>
<feature type="binding site" evidence="1">
    <location>
        <position position="18"/>
    </location>
    <ligand>
        <name>Zn(2+)</name>
        <dbReference type="ChEBI" id="CHEBI:29105"/>
    </ligand>
</feature>
<feature type="binding site" evidence="1">
    <location>
        <position position="21"/>
    </location>
    <ligand>
        <name>Zn(2+)</name>
        <dbReference type="ChEBI" id="CHEBI:29105"/>
    </ligand>
</feature>
<feature type="binding site" evidence="1">
    <location>
        <position position="74"/>
    </location>
    <ligand>
        <name>Zn(2+)</name>
        <dbReference type="ChEBI" id="CHEBI:29105"/>
    </ligand>
</feature>
<feature type="binding site" evidence="1">
    <location>
        <position position="77"/>
    </location>
    <ligand>
        <name>Zn(2+)</name>
        <dbReference type="ChEBI" id="CHEBI:29105"/>
    </ligand>
</feature>
<gene>
    <name type="ORF">B0546.4</name>
</gene>
<sequence>MGRQFAGICGARGSLYGCVVCNTYLTCSKELTSKAFTGSTGPATLFKRAWNVVYGRCEHRKMTTGWHTVRDVFCVTCNQKLGWMYEMAVSESQTYKETQVIIENANFEKIAGAIKDPLGEDRQEAPPAPNLEMSRYPLEAEKKSRPQYRTVSVSSSSSAEC</sequence>
<name>YPL2_CAEEL</name>
<comment type="alternative products">
    <event type="alternative splicing"/>
    <isoform>
        <id>O44440-1</id>
        <name>a</name>
        <sequence type="displayed"/>
    </isoform>
</comment>
<comment type="similarity">
    <text evidence="3">Belongs to the yippee family.</text>
</comment>
<accession>O44440</accession>
<accession>Q86S45</accession>
<protein>
    <recommendedName>
        <fullName>Protein yippee-like B0546.4</fullName>
    </recommendedName>
</protein>